<feature type="peptide" id="PRO_0000457136" description="Alyteserin-2c" evidence="2">
    <location>
        <begin position="1"/>
        <end position="17"/>
    </location>
</feature>
<feature type="modified residue" description="Leucine amide" evidence="2">
    <location>
        <position position="17"/>
    </location>
</feature>
<evidence type="ECO:0000250" key="1">
    <source>
        <dbReference type="UniProtKB" id="P0DQW5"/>
    </source>
</evidence>
<evidence type="ECO:0000269" key="2">
    <source>
    </source>
</evidence>
<evidence type="ECO:0000303" key="3">
    <source>
    </source>
</evidence>
<evidence type="ECO:0000305" key="4"/>
<evidence type="ECO:0000305" key="5">
    <source>
    </source>
</evidence>
<name>ATI2C_ALYOB</name>
<keyword id="KW-0027">Amidation</keyword>
<keyword id="KW-0878">Amphibian defense peptide</keyword>
<keyword id="KW-0044">Antibiotic</keyword>
<keyword id="KW-0929">Antimicrobial</keyword>
<keyword id="KW-0903">Direct protein sequencing</keyword>
<keyword id="KW-0391">Immunity</keyword>
<keyword id="KW-0399">Innate immunity</keyword>
<keyword id="KW-0472">Membrane</keyword>
<keyword id="KW-0964">Secreted</keyword>
<keyword id="KW-1052">Target cell membrane</keyword>
<keyword id="KW-1053">Target membrane</keyword>
<reference key="1">
    <citation type="journal article" date="2009" name="Peptides">
        <title>The alyteserins: two families of antimicrobial peptides from the skin secretions of the midwife toad Alytes obstetricans (Alytidae).</title>
        <authorList>
            <person name="Conlon J.M."/>
            <person name="Demandt A."/>
            <person name="Nielsen P.F."/>
            <person name="Leprince J."/>
            <person name="Vaudry H."/>
            <person name="Woodhams D.C."/>
        </authorList>
    </citation>
    <scope>PROTEIN SEQUENCE</scope>
    <scope>SUBCELLULAR LOCATION</scope>
    <scope>AMIDATION AT LEU-17</scope>
    <scope>MASS SPECTROMETRY</scope>
    <source>
        <tissue>Skin secretion</tissue>
    </source>
</reference>
<dbReference type="GO" id="GO:0005576">
    <property type="term" value="C:extracellular region"/>
    <property type="evidence" value="ECO:0007669"/>
    <property type="project" value="UniProtKB-SubCell"/>
</dbReference>
<dbReference type="GO" id="GO:0016020">
    <property type="term" value="C:membrane"/>
    <property type="evidence" value="ECO:0007669"/>
    <property type="project" value="UniProtKB-KW"/>
</dbReference>
<dbReference type="GO" id="GO:0044218">
    <property type="term" value="C:other organism cell membrane"/>
    <property type="evidence" value="ECO:0007669"/>
    <property type="project" value="UniProtKB-KW"/>
</dbReference>
<dbReference type="GO" id="GO:0042742">
    <property type="term" value="P:defense response to bacterium"/>
    <property type="evidence" value="ECO:0007669"/>
    <property type="project" value="UniProtKB-KW"/>
</dbReference>
<dbReference type="GO" id="GO:0045087">
    <property type="term" value="P:innate immune response"/>
    <property type="evidence" value="ECO:0007669"/>
    <property type="project" value="UniProtKB-KW"/>
</dbReference>
<accession>P0DQW7</accession>
<comment type="function">
    <text evidence="1">Shows more potent growth inhibitory activity against the Gram-positive bacteria S.aureus (MIC=50 uM) than against the Gram-negative bacteria E.coli (MIC=150 uM). Has a weak hemolytic activity against human erythrocytes (LC(50)=135 uM).</text>
</comment>
<comment type="subcellular location">
    <subcellularLocation>
        <location evidence="2">Secreted</location>
    </subcellularLocation>
    <subcellularLocation>
        <location evidence="4">Target cell membrane</location>
    </subcellularLocation>
</comment>
<comment type="tissue specificity">
    <text evidence="5">Expressed by the skin glands.</text>
</comment>
<comment type="mass spectrometry"/>
<comment type="similarity">
    <text evidence="4">Belongs to the frog skin active peptide (FSAP) family. Alyteserin-2 subfamily.</text>
</comment>
<organism>
    <name type="scientific">Alytes obstetricans</name>
    <name type="common">Common midwife toad</name>
    <name type="synonym">Bufo obstetricans</name>
    <dbReference type="NCBI Taxonomy" id="8443"/>
    <lineage>
        <taxon>Eukaryota</taxon>
        <taxon>Metazoa</taxon>
        <taxon>Chordata</taxon>
        <taxon>Craniata</taxon>
        <taxon>Vertebrata</taxon>
        <taxon>Euteleostomi</taxon>
        <taxon>Amphibia</taxon>
        <taxon>Batrachia</taxon>
        <taxon>Anura</taxon>
        <taxon>Alytidae</taxon>
        <taxon>Alytinae</taxon>
        <taxon>Alytes</taxon>
    </lineage>
</organism>
<proteinExistence type="evidence at protein level"/>
<protein>
    <recommendedName>
        <fullName evidence="3">Alyteserin-2c</fullName>
    </recommendedName>
</protein>
<sequence>ILGAILPLVSGLLSSKL</sequence>